<feature type="chain" id="PRO_0000134822" description="6,7-dimethyl-8-ribityllumazine synthase">
    <location>
        <begin position="1"/>
        <end position="165"/>
    </location>
</feature>
<feature type="active site" description="Proton donor" evidence="1">
    <location>
        <position position="88"/>
    </location>
</feature>
<feature type="binding site" evidence="1">
    <location>
        <position position="22"/>
    </location>
    <ligand>
        <name>5-amino-6-(D-ribitylamino)uracil</name>
        <dbReference type="ChEBI" id="CHEBI:15934"/>
    </ligand>
</feature>
<feature type="binding site" evidence="1">
    <location>
        <begin position="56"/>
        <end position="58"/>
    </location>
    <ligand>
        <name>5-amino-6-(D-ribitylamino)uracil</name>
        <dbReference type="ChEBI" id="CHEBI:15934"/>
    </ligand>
</feature>
<feature type="binding site" evidence="1">
    <location>
        <begin position="80"/>
        <end position="82"/>
    </location>
    <ligand>
        <name>5-amino-6-(D-ribitylamino)uracil</name>
        <dbReference type="ChEBI" id="CHEBI:15934"/>
    </ligand>
</feature>
<feature type="binding site" evidence="1">
    <location>
        <begin position="85"/>
        <end position="86"/>
    </location>
    <ligand>
        <name>(2S)-2-hydroxy-3-oxobutyl phosphate</name>
        <dbReference type="ChEBI" id="CHEBI:58830"/>
    </ligand>
</feature>
<feature type="binding site" evidence="1">
    <location>
        <position position="113"/>
    </location>
    <ligand>
        <name>5-amino-6-(D-ribitylamino)uracil</name>
        <dbReference type="ChEBI" id="CHEBI:15934"/>
    </ligand>
</feature>
<feature type="binding site" evidence="1">
    <location>
        <position position="127"/>
    </location>
    <ligand>
        <name>(2S)-2-hydroxy-3-oxobutyl phosphate</name>
        <dbReference type="ChEBI" id="CHEBI:58830"/>
    </ligand>
</feature>
<organism>
    <name type="scientific">Thermotoga maritima (strain ATCC 43589 / DSM 3109 / JCM 10099 / NBRC 100826 / MSB8)</name>
    <dbReference type="NCBI Taxonomy" id="243274"/>
    <lineage>
        <taxon>Bacteria</taxon>
        <taxon>Thermotogati</taxon>
        <taxon>Thermotogota</taxon>
        <taxon>Thermotogae</taxon>
        <taxon>Thermotogales</taxon>
        <taxon>Thermotogaceae</taxon>
        <taxon>Thermotoga</taxon>
    </lineage>
</organism>
<keyword id="KW-1185">Reference proteome</keyword>
<keyword id="KW-0686">Riboflavin biosynthesis</keyword>
<keyword id="KW-0808">Transferase</keyword>
<name>RISB_THEMA</name>
<sequence length="165" mass="17967">MKVVQGDYRGEGLKIAVVVPRFNDLVTSKLLEGALDGLKRHGVSDENITVVRIPGSMEAIYTLKRLLDLGVHDAIIVLGAVIRGETYHFNVVANEIGKAVAQFNMTSDIPIVFGVLTTDTLEQALNRAGAKSGNKGFEAAMVAIEMANLRKRLRRDVFESDSNGR</sequence>
<evidence type="ECO:0000255" key="1">
    <source>
        <dbReference type="HAMAP-Rule" id="MF_00178"/>
    </source>
</evidence>
<accession>Q9X2E5</accession>
<proteinExistence type="inferred from homology"/>
<protein>
    <recommendedName>
        <fullName evidence="1">6,7-dimethyl-8-ribityllumazine synthase</fullName>
        <shortName evidence="1">DMRL synthase</shortName>
        <shortName evidence="1">LS</shortName>
        <shortName evidence="1">Lumazine synthase</shortName>
        <ecNumber evidence="1">2.5.1.78</ecNumber>
    </recommendedName>
</protein>
<dbReference type="EC" id="2.5.1.78" evidence="1"/>
<dbReference type="EMBL" id="AE000512">
    <property type="protein sequence ID" value="AAD36888.1"/>
    <property type="molecule type" value="Genomic_DNA"/>
</dbReference>
<dbReference type="PIR" id="D72207">
    <property type="entry name" value="D72207"/>
</dbReference>
<dbReference type="RefSeq" id="NP_229622.1">
    <property type="nucleotide sequence ID" value="NC_000853.1"/>
</dbReference>
<dbReference type="RefSeq" id="WP_004082371.1">
    <property type="nucleotide sequence ID" value="NZ_CP011107.1"/>
</dbReference>
<dbReference type="SMR" id="Q9X2E5"/>
<dbReference type="FunCoup" id="Q9X2E5">
    <property type="interactions" value="390"/>
</dbReference>
<dbReference type="STRING" id="243274.TM_1825"/>
<dbReference type="PaxDb" id="243274-THEMA_05070"/>
<dbReference type="EnsemblBacteria" id="AAD36888">
    <property type="protein sequence ID" value="AAD36888"/>
    <property type="gene ID" value="TM_1825"/>
</dbReference>
<dbReference type="KEGG" id="tma:TM1825"/>
<dbReference type="KEGG" id="tmi:THEMA_05070"/>
<dbReference type="KEGG" id="tmm:Tmari_1835"/>
<dbReference type="KEGG" id="tmw:THMA_1870"/>
<dbReference type="eggNOG" id="COG0054">
    <property type="taxonomic scope" value="Bacteria"/>
</dbReference>
<dbReference type="InParanoid" id="Q9X2E5"/>
<dbReference type="OrthoDB" id="9809709at2"/>
<dbReference type="BRENDA" id="2.5.1.78">
    <property type="organism ID" value="6331"/>
</dbReference>
<dbReference type="UniPathway" id="UPA00275">
    <property type="reaction ID" value="UER00404"/>
</dbReference>
<dbReference type="Proteomes" id="UP000008183">
    <property type="component" value="Chromosome"/>
</dbReference>
<dbReference type="GO" id="GO:0005737">
    <property type="term" value="C:cytoplasm"/>
    <property type="evidence" value="ECO:0000318"/>
    <property type="project" value="GO_Central"/>
</dbReference>
<dbReference type="GO" id="GO:0005829">
    <property type="term" value="C:cytosol"/>
    <property type="evidence" value="ECO:0000318"/>
    <property type="project" value="GO_Central"/>
</dbReference>
<dbReference type="GO" id="GO:0009349">
    <property type="term" value="C:riboflavin synthase complex"/>
    <property type="evidence" value="ECO:0007669"/>
    <property type="project" value="InterPro"/>
</dbReference>
<dbReference type="GO" id="GO:0000906">
    <property type="term" value="F:6,7-dimethyl-8-ribityllumazine synthase activity"/>
    <property type="evidence" value="ECO:0000318"/>
    <property type="project" value="GO_Central"/>
</dbReference>
<dbReference type="GO" id="GO:0009231">
    <property type="term" value="P:riboflavin biosynthetic process"/>
    <property type="evidence" value="ECO:0000318"/>
    <property type="project" value="GO_Central"/>
</dbReference>
<dbReference type="CDD" id="cd09209">
    <property type="entry name" value="Lumazine_synthase-I"/>
    <property type="match status" value="1"/>
</dbReference>
<dbReference type="FunFam" id="3.40.50.960:FF:000001">
    <property type="entry name" value="6,7-dimethyl-8-ribityllumazine synthase"/>
    <property type="match status" value="1"/>
</dbReference>
<dbReference type="Gene3D" id="3.40.50.960">
    <property type="entry name" value="Lumazine/riboflavin synthase"/>
    <property type="match status" value="1"/>
</dbReference>
<dbReference type="HAMAP" id="MF_00178">
    <property type="entry name" value="Lumazine_synth"/>
    <property type="match status" value="1"/>
</dbReference>
<dbReference type="InterPro" id="IPR034964">
    <property type="entry name" value="LS"/>
</dbReference>
<dbReference type="InterPro" id="IPR002180">
    <property type="entry name" value="LS/RS"/>
</dbReference>
<dbReference type="InterPro" id="IPR036467">
    <property type="entry name" value="LS/RS_sf"/>
</dbReference>
<dbReference type="NCBIfam" id="TIGR00114">
    <property type="entry name" value="lumazine-synth"/>
    <property type="match status" value="1"/>
</dbReference>
<dbReference type="PANTHER" id="PTHR21058:SF0">
    <property type="entry name" value="6,7-DIMETHYL-8-RIBITYLLUMAZINE SYNTHASE"/>
    <property type="match status" value="1"/>
</dbReference>
<dbReference type="PANTHER" id="PTHR21058">
    <property type="entry name" value="6,7-DIMETHYL-8-RIBITYLLUMAZINE SYNTHASE DMRL SYNTHASE LUMAZINE SYNTHASE"/>
    <property type="match status" value="1"/>
</dbReference>
<dbReference type="Pfam" id="PF00885">
    <property type="entry name" value="DMRL_synthase"/>
    <property type="match status" value="1"/>
</dbReference>
<dbReference type="SUPFAM" id="SSF52121">
    <property type="entry name" value="Lumazine synthase"/>
    <property type="match status" value="1"/>
</dbReference>
<gene>
    <name evidence="1" type="primary">ribH</name>
    <name type="ordered locus">TM_1825</name>
</gene>
<comment type="function">
    <text evidence="1">Catalyzes the formation of 6,7-dimethyl-8-ribityllumazine by condensation of 5-amino-6-(D-ribitylamino)uracil with 3,4-dihydroxy-2-butanone 4-phosphate. This is the penultimate step in the biosynthesis of riboflavin.</text>
</comment>
<comment type="catalytic activity">
    <reaction evidence="1">
        <text>(2S)-2-hydroxy-3-oxobutyl phosphate + 5-amino-6-(D-ribitylamino)uracil = 6,7-dimethyl-8-(1-D-ribityl)lumazine + phosphate + 2 H2O + H(+)</text>
        <dbReference type="Rhea" id="RHEA:26152"/>
        <dbReference type="ChEBI" id="CHEBI:15377"/>
        <dbReference type="ChEBI" id="CHEBI:15378"/>
        <dbReference type="ChEBI" id="CHEBI:15934"/>
        <dbReference type="ChEBI" id="CHEBI:43474"/>
        <dbReference type="ChEBI" id="CHEBI:58201"/>
        <dbReference type="ChEBI" id="CHEBI:58830"/>
        <dbReference type="EC" id="2.5.1.78"/>
    </reaction>
</comment>
<comment type="pathway">
    <text evidence="1">Cofactor biosynthesis; riboflavin biosynthesis; riboflavin from 2-hydroxy-3-oxobutyl phosphate and 5-amino-6-(D-ribitylamino)uracil: step 1/2.</text>
</comment>
<comment type="similarity">
    <text evidence="1">Belongs to the DMRL synthase family.</text>
</comment>
<reference key="1">
    <citation type="journal article" date="1999" name="Nature">
        <title>Evidence for lateral gene transfer between Archaea and Bacteria from genome sequence of Thermotoga maritima.</title>
        <authorList>
            <person name="Nelson K.E."/>
            <person name="Clayton R.A."/>
            <person name="Gill S.R."/>
            <person name="Gwinn M.L."/>
            <person name="Dodson R.J."/>
            <person name="Haft D.H."/>
            <person name="Hickey E.K."/>
            <person name="Peterson J.D."/>
            <person name="Nelson W.C."/>
            <person name="Ketchum K.A."/>
            <person name="McDonald L.A."/>
            <person name="Utterback T.R."/>
            <person name="Malek J.A."/>
            <person name="Linher K.D."/>
            <person name="Garrett M.M."/>
            <person name="Stewart A.M."/>
            <person name="Cotton M.D."/>
            <person name="Pratt M.S."/>
            <person name="Phillips C.A."/>
            <person name="Richardson D.L."/>
            <person name="Heidelberg J.F."/>
            <person name="Sutton G.G."/>
            <person name="Fleischmann R.D."/>
            <person name="Eisen J.A."/>
            <person name="White O."/>
            <person name="Salzberg S.L."/>
            <person name="Smith H.O."/>
            <person name="Venter J.C."/>
            <person name="Fraser C.M."/>
        </authorList>
    </citation>
    <scope>NUCLEOTIDE SEQUENCE [LARGE SCALE GENOMIC DNA]</scope>
    <source>
        <strain>ATCC 43589 / DSM 3109 / JCM 10099 / NBRC 100826 / MSB8</strain>
    </source>
</reference>